<keyword id="KW-0143">Chaperone</keyword>
<keyword id="KW-0963">Cytoplasm</keyword>
<keyword id="KW-1015">Disulfide bond</keyword>
<keyword id="KW-0676">Redox-active center</keyword>
<keyword id="KW-0862">Zinc</keyword>
<name>HSLO_STRP7</name>
<organism>
    <name type="scientific">Streptococcus pneumoniae (strain 70585)</name>
    <dbReference type="NCBI Taxonomy" id="488221"/>
    <lineage>
        <taxon>Bacteria</taxon>
        <taxon>Bacillati</taxon>
        <taxon>Bacillota</taxon>
        <taxon>Bacilli</taxon>
        <taxon>Lactobacillales</taxon>
        <taxon>Streptococcaceae</taxon>
        <taxon>Streptococcus</taxon>
    </lineage>
</organism>
<protein>
    <recommendedName>
        <fullName evidence="1">33 kDa chaperonin</fullName>
    </recommendedName>
    <alternativeName>
        <fullName evidence="1">Heat shock protein 33 homolog</fullName>
        <shortName evidence="1">HSP33</shortName>
    </alternativeName>
</protein>
<gene>
    <name evidence="1" type="primary">hslO</name>
    <name type="ordered locus">SP70585_2314</name>
</gene>
<reference key="1">
    <citation type="journal article" date="2010" name="Genome Biol.">
        <title>Structure and dynamics of the pan-genome of Streptococcus pneumoniae and closely related species.</title>
        <authorList>
            <person name="Donati C."/>
            <person name="Hiller N.L."/>
            <person name="Tettelin H."/>
            <person name="Muzzi A."/>
            <person name="Croucher N.J."/>
            <person name="Angiuoli S.V."/>
            <person name="Oggioni M."/>
            <person name="Dunning Hotopp J.C."/>
            <person name="Hu F.Z."/>
            <person name="Riley D.R."/>
            <person name="Covacci A."/>
            <person name="Mitchell T.J."/>
            <person name="Bentley S.D."/>
            <person name="Kilian M."/>
            <person name="Ehrlich G.D."/>
            <person name="Rappuoli R."/>
            <person name="Moxon E.R."/>
            <person name="Masignani V."/>
        </authorList>
    </citation>
    <scope>NUCLEOTIDE SEQUENCE [LARGE SCALE GENOMIC DNA]</scope>
    <source>
        <strain>70585</strain>
    </source>
</reference>
<accession>C1CBG4</accession>
<dbReference type="EMBL" id="CP000918">
    <property type="protein sequence ID" value="ACO17234.1"/>
    <property type="molecule type" value="Genomic_DNA"/>
</dbReference>
<dbReference type="RefSeq" id="WP_000357847.1">
    <property type="nucleotide sequence ID" value="NC_012468.1"/>
</dbReference>
<dbReference type="SMR" id="C1CBG4"/>
<dbReference type="KEGG" id="snm:SP70585_2314"/>
<dbReference type="HOGENOM" id="CLU_054493_1_0_9"/>
<dbReference type="Proteomes" id="UP000002211">
    <property type="component" value="Chromosome"/>
</dbReference>
<dbReference type="GO" id="GO:0005737">
    <property type="term" value="C:cytoplasm"/>
    <property type="evidence" value="ECO:0007669"/>
    <property type="project" value="UniProtKB-SubCell"/>
</dbReference>
<dbReference type="GO" id="GO:0044183">
    <property type="term" value="F:protein folding chaperone"/>
    <property type="evidence" value="ECO:0007669"/>
    <property type="project" value="TreeGrafter"/>
</dbReference>
<dbReference type="GO" id="GO:0051082">
    <property type="term" value="F:unfolded protein binding"/>
    <property type="evidence" value="ECO:0007669"/>
    <property type="project" value="UniProtKB-UniRule"/>
</dbReference>
<dbReference type="GO" id="GO:0042026">
    <property type="term" value="P:protein refolding"/>
    <property type="evidence" value="ECO:0007669"/>
    <property type="project" value="TreeGrafter"/>
</dbReference>
<dbReference type="CDD" id="cd00498">
    <property type="entry name" value="Hsp33"/>
    <property type="match status" value="1"/>
</dbReference>
<dbReference type="Gene3D" id="3.55.30.10">
    <property type="entry name" value="Hsp33 domain"/>
    <property type="match status" value="1"/>
</dbReference>
<dbReference type="Gene3D" id="3.90.1280.10">
    <property type="entry name" value="HSP33 redox switch-like"/>
    <property type="match status" value="1"/>
</dbReference>
<dbReference type="HAMAP" id="MF_00117">
    <property type="entry name" value="HslO"/>
    <property type="match status" value="1"/>
</dbReference>
<dbReference type="InterPro" id="IPR000397">
    <property type="entry name" value="Heat_shock_Hsp33"/>
</dbReference>
<dbReference type="InterPro" id="IPR016154">
    <property type="entry name" value="Heat_shock_Hsp33_C"/>
</dbReference>
<dbReference type="InterPro" id="IPR016153">
    <property type="entry name" value="Heat_shock_Hsp33_N"/>
</dbReference>
<dbReference type="NCBIfam" id="NF001033">
    <property type="entry name" value="PRK00114.1"/>
    <property type="match status" value="1"/>
</dbReference>
<dbReference type="PANTHER" id="PTHR30111">
    <property type="entry name" value="33 KDA CHAPERONIN"/>
    <property type="match status" value="1"/>
</dbReference>
<dbReference type="PANTHER" id="PTHR30111:SF1">
    <property type="entry name" value="33 KDA CHAPERONIN"/>
    <property type="match status" value="1"/>
</dbReference>
<dbReference type="Pfam" id="PF01430">
    <property type="entry name" value="HSP33"/>
    <property type="match status" value="1"/>
</dbReference>
<dbReference type="PIRSF" id="PIRSF005261">
    <property type="entry name" value="Heat_shock_Hsp33"/>
    <property type="match status" value="1"/>
</dbReference>
<dbReference type="SUPFAM" id="SSF64397">
    <property type="entry name" value="Hsp33 domain"/>
    <property type="match status" value="1"/>
</dbReference>
<dbReference type="SUPFAM" id="SSF118352">
    <property type="entry name" value="HSP33 redox switch-like"/>
    <property type="match status" value="1"/>
</dbReference>
<sequence length="290" mass="31663">MDKIIKTISESGAFRAFVLDSTETVRTAQEKHQTQASSTVALGRTLIASQILAANEKGNTKLTVKVLGSSSLGAIITVADTKGNVKGYVQNPGVDIKKTATGEVLVGPFVGNGQFLVITDYGTGNPYNSITPLISGEIGEDLAFYLTESQQTPSAVGLNVLLDEEDKVKVAGGFLVQVLPGAKKEEIARFEKRIQEMPAISTLLESDDHIEALLKAIYGDEAYKRLSEEEIRFQCDCSHERFMNALASLPSSDLQEMKEEDHGAEITCQFCQTTYNFDEKDLEELIRDKS</sequence>
<proteinExistence type="inferred from homology"/>
<evidence type="ECO:0000255" key="1">
    <source>
        <dbReference type="HAMAP-Rule" id="MF_00117"/>
    </source>
</evidence>
<comment type="function">
    <text evidence="1">Redox regulated molecular chaperone. Protects both thermally unfolding and oxidatively damaged proteins from irreversible aggregation. Plays an important role in the bacterial defense system toward oxidative stress.</text>
</comment>
<comment type="subcellular location">
    <subcellularLocation>
        <location evidence="1">Cytoplasm</location>
    </subcellularLocation>
</comment>
<comment type="PTM">
    <text evidence="1">Under oxidizing conditions two disulfide bonds are formed involving the reactive cysteines. Under reducing conditions zinc is bound to the reactive cysteines and the protein is inactive.</text>
</comment>
<comment type="similarity">
    <text evidence="1">Belongs to the HSP33 family.</text>
</comment>
<feature type="chain" id="PRO_1000119265" description="33 kDa chaperonin">
    <location>
        <begin position="1"/>
        <end position="290"/>
    </location>
</feature>
<feature type="disulfide bond" description="Redox-active" evidence="1">
    <location>
        <begin position="235"/>
        <end position="237"/>
    </location>
</feature>
<feature type="disulfide bond" description="Redox-active" evidence="1">
    <location>
        <begin position="268"/>
        <end position="271"/>
    </location>
</feature>